<organism>
    <name type="scientific">Trichormus variabilis (strain ATCC 29413 / PCC 7937)</name>
    <name type="common">Anabaena variabilis</name>
    <dbReference type="NCBI Taxonomy" id="240292"/>
    <lineage>
        <taxon>Bacteria</taxon>
        <taxon>Bacillati</taxon>
        <taxon>Cyanobacteriota</taxon>
        <taxon>Cyanophyceae</taxon>
        <taxon>Nostocales</taxon>
        <taxon>Nostocaceae</taxon>
        <taxon>Trichormus</taxon>
    </lineage>
</organism>
<reference key="1">
    <citation type="journal article" date="2014" name="Stand. Genomic Sci.">
        <title>Complete genome sequence of Anabaena variabilis ATCC 29413.</title>
        <authorList>
            <person name="Thiel T."/>
            <person name="Pratte B.S."/>
            <person name="Zhong J."/>
            <person name="Goodwin L."/>
            <person name="Copeland A."/>
            <person name="Lucas S."/>
            <person name="Han C."/>
            <person name="Pitluck S."/>
            <person name="Land M.L."/>
            <person name="Kyrpides N.C."/>
            <person name="Woyke T."/>
        </authorList>
    </citation>
    <scope>NUCLEOTIDE SEQUENCE [LARGE SCALE GENOMIC DNA]</scope>
    <source>
        <strain>ATCC 29413 / PCC 7937</strain>
    </source>
</reference>
<gene>
    <name evidence="1" type="primary">rplJ</name>
    <name evidence="1" type="synonym">rpl10</name>
    <name type="ordered locus">Ava_2554</name>
</gene>
<dbReference type="EMBL" id="CP000117">
    <property type="protein sequence ID" value="ABA22169.1"/>
    <property type="molecule type" value="Genomic_DNA"/>
</dbReference>
<dbReference type="SMR" id="Q3MA17"/>
<dbReference type="STRING" id="240292.Ava_2554"/>
<dbReference type="KEGG" id="ava:Ava_2554"/>
<dbReference type="eggNOG" id="COG0244">
    <property type="taxonomic scope" value="Bacteria"/>
</dbReference>
<dbReference type="HOGENOM" id="CLU_092227_1_1_3"/>
<dbReference type="Proteomes" id="UP000002533">
    <property type="component" value="Chromosome"/>
</dbReference>
<dbReference type="GO" id="GO:0015934">
    <property type="term" value="C:large ribosomal subunit"/>
    <property type="evidence" value="ECO:0007669"/>
    <property type="project" value="InterPro"/>
</dbReference>
<dbReference type="GO" id="GO:0070180">
    <property type="term" value="F:large ribosomal subunit rRNA binding"/>
    <property type="evidence" value="ECO:0007669"/>
    <property type="project" value="UniProtKB-UniRule"/>
</dbReference>
<dbReference type="GO" id="GO:0003735">
    <property type="term" value="F:structural constituent of ribosome"/>
    <property type="evidence" value="ECO:0007669"/>
    <property type="project" value="InterPro"/>
</dbReference>
<dbReference type="GO" id="GO:0006412">
    <property type="term" value="P:translation"/>
    <property type="evidence" value="ECO:0007669"/>
    <property type="project" value="UniProtKB-UniRule"/>
</dbReference>
<dbReference type="CDD" id="cd05797">
    <property type="entry name" value="Ribosomal_L10"/>
    <property type="match status" value="1"/>
</dbReference>
<dbReference type="Gene3D" id="3.30.70.1730">
    <property type="match status" value="1"/>
</dbReference>
<dbReference type="Gene3D" id="6.10.250.290">
    <property type="match status" value="1"/>
</dbReference>
<dbReference type="HAMAP" id="MF_00362">
    <property type="entry name" value="Ribosomal_uL10"/>
    <property type="match status" value="1"/>
</dbReference>
<dbReference type="InterPro" id="IPR001790">
    <property type="entry name" value="Ribosomal_uL10"/>
</dbReference>
<dbReference type="InterPro" id="IPR043141">
    <property type="entry name" value="Ribosomal_uL10-like_sf"/>
</dbReference>
<dbReference type="InterPro" id="IPR022973">
    <property type="entry name" value="Ribosomal_uL10_bac"/>
</dbReference>
<dbReference type="InterPro" id="IPR047865">
    <property type="entry name" value="Ribosomal_uL10_bac_type"/>
</dbReference>
<dbReference type="InterPro" id="IPR002363">
    <property type="entry name" value="Ribosomal_uL10_CS_bac"/>
</dbReference>
<dbReference type="NCBIfam" id="NF000955">
    <property type="entry name" value="PRK00099.1-1"/>
    <property type="match status" value="1"/>
</dbReference>
<dbReference type="PANTHER" id="PTHR11560">
    <property type="entry name" value="39S RIBOSOMAL PROTEIN L10, MITOCHONDRIAL"/>
    <property type="match status" value="1"/>
</dbReference>
<dbReference type="Pfam" id="PF00466">
    <property type="entry name" value="Ribosomal_L10"/>
    <property type="match status" value="1"/>
</dbReference>
<dbReference type="SUPFAM" id="SSF160369">
    <property type="entry name" value="Ribosomal protein L10-like"/>
    <property type="match status" value="1"/>
</dbReference>
<dbReference type="PROSITE" id="PS01109">
    <property type="entry name" value="RIBOSOMAL_L10"/>
    <property type="match status" value="1"/>
</dbReference>
<feature type="chain" id="PRO_0000234831" description="Large ribosomal subunit protein uL10">
    <location>
        <begin position="1"/>
        <end position="181"/>
    </location>
</feature>
<name>RL10_TRIV2</name>
<comment type="function">
    <text evidence="1">Forms part of the ribosomal stalk, playing a central role in the interaction of the ribosome with GTP-bound translation factors.</text>
</comment>
<comment type="subunit">
    <text evidence="1">Part of the ribosomal stalk of the 50S ribosomal subunit. The N-terminus interacts with L11 and the large rRNA to form the base of the stalk. The C-terminus forms an elongated spine to which L12 dimers bind in a sequential fashion forming a multimeric L10(L12)X complex.</text>
</comment>
<comment type="similarity">
    <text evidence="1">Belongs to the universal ribosomal protein uL10 family.</text>
</comment>
<accession>Q3MA17</accession>
<protein>
    <recommendedName>
        <fullName evidence="1">Large ribosomal subunit protein uL10</fullName>
    </recommendedName>
    <alternativeName>
        <fullName evidence="2">50S ribosomal protein L10</fullName>
    </alternativeName>
</protein>
<proteinExistence type="inferred from homology"/>
<sequence>MGRTLENKKEIVADLKETLGESTLALVIEYQGLTVAEISDLRRRLRPSGTVCKVTKNTLMGIAIQDDEKWQPLSELLKGSSAFLLVKEDFSSAIKAYQDFQKVTKKTELRGGVMEGRLLKEPDVKALGDLPSKEQLMGQIAGAINALATKIAVGINEVPGGLARALQAVADKENGGDDSAA</sequence>
<keyword id="KW-0687">Ribonucleoprotein</keyword>
<keyword id="KW-0689">Ribosomal protein</keyword>
<keyword id="KW-0694">RNA-binding</keyword>
<keyword id="KW-0699">rRNA-binding</keyword>
<evidence type="ECO:0000255" key="1">
    <source>
        <dbReference type="HAMAP-Rule" id="MF_00362"/>
    </source>
</evidence>
<evidence type="ECO:0000305" key="2"/>